<evidence type="ECO:0000250" key="1">
    <source>
        <dbReference type="UniProtKB" id="Q96MH6"/>
    </source>
</evidence>
<evidence type="ECO:0000250" key="2">
    <source>
        <dbReference type="UniProtKB" id="Q9D850"/>
    </source>
</evidence>
<evidence type="ECO:0000255" key="3"/>
<evidence type="ECO:0000305" key="4"/>
<organism>
    <name type="scientific">Bos taurus</name>
    <name type="common">Bovine</name>
    <dbReference type="NCBI Taxonomy" id="9913"/>
    <lineage>
        <taxon>Eukaryota</taxon>
        <taxon>Metazoa</taxon>
        <taxon>Chordata</taxon>
        <taxon>Craniata</taxon>
        <taxon>Vertebrata</taxon>
        <taxon>Euteleostomi</taxon>
        <taxon>Mammalia</taxon>
        <taxon>Eutheria</taxon>
        <taxon>Laurasiatheria</taxon>
        <taxon>Artiodactyla</taxon>
        <taxon>Ruminantia</taxon>
        <taxon>Pecora</taxon>
        <taxon>Bovidae</taxon>
        <taxon>Bovinae</taxon>
        <taxon>Bos</taxon>
    </lineage>
</organism>
<comment type="function">
    <text evidence="1 2">Catalytic subunit of the alternative triglyceride biosynthesis pathway, which mediates formation of triacylglycerol from diacylglycerol and membrane phospholipids. Synthesizes triacylglycerol at the expense of membrane phospholipids, such as phosphatidylcholine (PC) and its ether-linked form (ePC), thereby altering the composition of membranes. The alternative triglyceride biosynthesis pathway is probably required to provide the energy required for rapid growth when fuel sources are limiting. It maintains mitochondrial function during periods of extracellular lipid starvation (By similarity). Can also use acyl-CoA as donor: acts as a acyl-CoA:monoacylglycerol acyltransferase (MGAT), but also shows acyl-CoA:diacylglycerol acyltransferase (DGAT) activity (By similarity).</text>
</comment>
<comment type="catalytic activity">
    <reaction evidence="1">
        <text>a 1,2-diacylglycerol + a 1,2-diacyl-sn-glycero-3-phosphocholine = a triacylglycerol + a 1-acyl-sn-glycero-3-phosphocholine</text>
        <dbReference type="Rhea" id="RHEA:77743"/>
        <dbReference type="ChEBI" id="CHEBI:17855"/>
        <dbReference type="ChEBI" id="CHEBI:49172"/>
        <dbReference type="ChEBI" id="CHEBI:57643"/>
        <dbReference type="ChEBI" id="CHEBI:58168"/>
    </reaction>
    <physiologicalReaction direction="left-to-right" evidence="1">
        <dbReference type="Rhea" id="RHEA:77744"/>
    </physiologicalReaction>
</comment>
<comment type="catalytic activity">
    <reaction evidence="1">
        <text>a 1-O-alkyl-2-acyl-sn-glycero-3-phosphocholine + a 1,2-diacylglycerol = a 1-O-alkyl-sn-glycero-3-phosphocholine + a triacylglycerol</text>
        <dbReference type="Rhea" id="RHEA:77759"/>
        <dbReference type="ChEBI" id="CHEBI:17855"/>
        <dbReference type="ChEBI" id="CHEBI:30909"/>
        <dbReference type="ChEBI" id="CHEBI:36702"/>
        <dbReference type="ChEBI" id="CHEBI:49172"/>
    </reaction>
    <physiologicalReaction direction="left-to-right" evidence="1">
        <dbReference type="Rhea" id="RHEA:77760"/>
    </physiologicalReaction>
</comment>
<comment type="catalytic activity">
    <reaction evidence="2">
        <text>a 2-acylglycerol + an acyl-CoA = a 1,2-diacylglycerol + CoA</text>
        <dbReference type="Rhea" id="RHEA:16741"/>
        <dbReference type="ChEBI" id="CHEBI:17389"/>
        <dbReference type="ChEBI" id="CHEBI:49172"/>
        <dbReference type="ChEBI" id="CHEBI:57287"/>
        <dbReference type="ChEBI" id="CHEBI:58342"/>
        <dbReference type="EC" id="2.3.1.22"/>
    </reaction>
    <physiologicalReaction direction="left-to-right" evidence="2">
        <dbReference type="Rhea" id="RHEA:16742"/>
    </physiologicalReaction>
</comment>
<comment type="catalytic activity">
    <reaction evidence="2">
        <text>an acyl-CoA + a 1,2-diacyl-sn-glycerol = a triacyl-sn-glycerol + CoA</text>
        <dbReference type="Rhea" id="RHEA:10868"/>
        <dbReference type="ChEBI" id="CHEBI:17815"/>
        <dbReference type="ChEBI" id="CHEBI:57287"/>
        <dbReference type="ChEBI" id="CHEBI:58342"/>
        <dbReference type="ChEBI" id="CHEBI:64615"/>
        <dbReference type="EC" id="2.3.1.20"/>
    </reaction>
    <physiologicalReaction direction="left-to-right" evidence="2">
        <dbReference type="Rhea" id="RHEA:10869"/>
    </physiologicalReaction>
</comment>
<comment type="catalytic activity">
    <reaction evidence="2">
        <text>2-(9Z-octadecenoyl)-glycerol + (9Z)-octadecenoyl-CoA = 1,2-di-(9Z-octadecenoyl)-glycerol + CoA</text>
        <dbReference type="Rhea" id="RHEA:39951"/>
        <dbReference type="ChEBI" id="CHEBI:52323"/>
        <dbReference type="ChEBI" id="CHEBI:57287"/>
        <dbReference type="ChEBI" id="CHEBI:57387"/>
        <dbReference type="ChEBI" id="CHEBI:73990"/>
    </reaction>
    <physiologicalReaction direction="left-to-right" evidence="2">
        <dbReference type="Rhea" id="RHEA:39952"/>
    </physiologicalReaction>
</comment>
<comment type="catalytic activity">
    <reaction evidence="2">
        <text>1,2-di-(9Z-octadecenoyl)-sn-glycerol + (9Z)-octadecenoyl-CoA = 1,2,3-tri-(9Z-octadecenoyl)-glycerol + CoA</text>
        <dbReference type="Rhea" id="RHEA:38219"/>
        <dbReference type="ChEBI" id="CHEBI:52333"/>
        <dbReference type="ChEBI" id="CHEBI:53753"/>
        <dbReference type="ChEBI" id="CHEBI:57287"/>
        <dbReference type="ChEBI" id="CHEBI:57387"/>
    </reaction>
    <physiologicalReaction direction="left-to-right" evidence="2">
        <dbReference type="Rhea" id="RHEA:38220"/>
    </physiologicalReaction>
</comment>
<comment type="activity regulation">
    <text evidence="1">Acyltransferase activity is specifically inhibited by TMX1 at the endoplasmic reticulum, restricting accumulation of triacylglycerol.</text>
</comment>
<comment type="subcellular location">
    <subcellularLocation>
        <location evidence="1">Endoplasmic reticulum membrane</location>
        <topology evidence="3">Multi-pass membrane protein</topology>
    </subcellularLocation>
</comment>
<comment type="similarity">
    <text evidence="4">Belongs to the diacylglycerol acyltransferase family. Highly divergent.</text>
</comment>
<protein>
    <recommendedName>
        <fullName evidence="1">DGAT1/2-independent enzyme synthesizing storage lipids</fullName>
        <shortName evidence="1">DIESL</shortName>
        <ecNumber evidence="1">2.3.1.-</ecNumber>
    </recommendedName>
    <alternativeName>
        <fullName>2-acylglycerol/1,2-diacylglycerol O-acyltransferase</fullName>
    </alternativeName>
    <alternativeName>
        <fullName>Monoacylglycerol/Diacylglycerol O-acyltransferase</fullName>
        <shortName>MGAT/DGAT</shortName>
        <ecNumber evidence="2">2.3.1.20</ecNumber>
        <ecNumber evidence="2">2.3.1.22</ecNumber>
    </alternativeName>
    <alternativeName>
        <fullName>Transmembrane protein 68</fullName>
    </alternativeName>
</protein>
<gene>
    <name type="primary">TMEM68</name>
</gene>
<reference key="1">
    <citation type="submission" date="2006-08" db="EMBL/GenBank/DDBJ databases">
        <authorList>
            <consortium name="NIH - Mammalian Gene Collection (MGC) project"/>
        </authorList>
    </citation>
    <scope>NUCLEOTIDE SEQUENCE [LARGE SCALE MRNA]</scope>
    <source>
        <strain>Hereford</strain>
        <tissue>Fetal pons</tissue>
    </source>
</reference>
<proteinExistence type="evidence at transcript level"/>
<keyword id="KW-0012">Acyltransferase</keyword>
<keyword id="KW-0256">Endoplasmic reticulum</keyword>
<keyword id="KW-0325">Glycoprotein</keyword>
<keyword id="KW-0443">Lipid metabolism</keyword>
<keyword id="KW-0472">Membrane</keyword>
<keyword id="KW-1185">Reference proteome</keyword>
<keyword id="KW-0808">Transferase</keyword>
<keyword id="KW-0812">Transmembrane</keyword>
<keyword id="KW-1133">Transmembrane helix</keyword>
<accession>Q0VCR6</accession>
<sequence length="334" mass="38555">MTNKNQSFGVGQDSMSSMTCLIHVLEAWFGVEHLEDYWNFANYLLWVFTPLLLLILPYFTIFLLYLTIIFLHIYKRKNVLKEAYSHNLWDGARKTVATLWDGHAAVWHGYEVHGMEKIPEEGPALIIFYHGAIPIDFYYFMAKIFIHKGRTCRVVADHFVFKIPGFSLLLDVFCAIHGPREKCVEILQSGHLLAISPGGVREALMSDETYNIVWGNRKGFAQVAIDAKVPIIPMFTQNIREGFRSLGGTRLFRWLYEKFRYPFAPMYGGFPVKLRTYLGDPIPYDPKITAEELAEKTKDAVQALIDKHQRIPGNIMSALLERFRNKQKINQKTL</sequence>
<name>DIESL_BOVIN</name>
<dbReference type="EC" id="2.3.1.-" evidence="1"/>
<dbReference type="EC" id="2.3.1.20" evidence="2"/>
<dbReference type="EC" id="2.3.1.22" evidence="2"/>
<dbReference type="EMBL" id="BC120040">
    <property type="protein sequence ID" value="AAI20041.1"/>
    <property type="molecule type" value="mRNA"/>
</dbReference>
<dbReference type="RefSeq" id="NP_001069477.1">
    <property type="nucleotide sequence ID" value="NM_001076009.1"/>
</dbReference>
<dbReference type="RefSeq" id="XP_005215470.1">
    <property type="nucleotide sequence ID" value="XM_005215413.5"/>
</dbReference>
<dbReference type="RefSeq" id="XP_010810301.1">
    <property type="nucleotide sequence ID" value="XM_010811999.4"/>
</dbReference>
<dbReference type="SMR" id="Q0VCR6"/>
<dbReference type="FunCoup" id="Q0VCR6">
    <property type="interactions" value="3462"/>
</dbReference>
<dbReference type="STRING" id="9913.ENSBTAP00000037154"/>
<dbReference type="GlyGen" id="Q0VCR6">
    <property type="glycosylation" value="1 site"/>
</dbReference>
<dbReference type="PaxDb" id="9913-ENSBTAP00000037154"/>
<dbReference type="Ensembl" id="ENSBTAT00000037320.3">
    <property type="protein sequence ID" value="ENSBTAP00000037154.2"/>
    <property type="gene ID" value="ENSBTAG00000005893.6"/>
</dbReference>
<dbReference type="GeneID" id="534013"/>
<dbReference type="KEGG" id="bta:534013"/>
<dbReference type="CTD" id="137695"/>
<dbReference type="VEuPathDB" id="HostDB:ENSBTAG00000005893"/>
<dbReference type="VGNC" id="VGNC:36107">
    <property type="gene designation" value="TMEM68"/>
</dbReference>
<dbReference type="eggNOG" id="KOG4321">
    <property type="taxonomic scope" value="Eukaryota"/>
</dbReference>
<dbReference type="GeneTree" id="ENSGT00390000011782"/>
<dbReference type="HOGENOM" id="CLU_056812_1_0_1"/>
<dbReference type="InParanoid" id="Q0VCR6"/>
<dbReference type="OMA" id="SYWNGAR"/>
<dbReference type="OrthoDB" id="44277at2759"/>
<dbReference type="TreeFam" id="TF312828"/>
<dbReference type="Proteomes" id="UP000009136">
    <property type="component" value="Chromosome 14"/>
</dbReference>
<dbReference type="Bgee" id="ENSBTAG00000005893">
    <property type="expression patterns" value="Expressed in mammary gland and 106 other cell types or tissues"/>
</dbReference>
<dbReference type="GO" id="GO:0005789">
    <property type="term" value="C:endoplasmic reticulum membrane"/>
    <property type="evidence" value="ECO:0000250"/>
    <property type="project" value="UniProtKB"/>
</dbReference>
<dbReference type="GO" id="GO:0016020">
    <property type="term" value="C:membrane"/>
    <property type="evidence" value="ECO:0000318"/>
    <property type="project" value="GO_Central"/>
</dbReference>
<dbReference type="GO" id="GO:0046027">
    <property type="term" value="F:phospholipid:diacylglycerol acyltransferase activity"/>
    <property type="evidence" value="ECO:0000250"/>
    <property type="project" value="UniProtKB"/>
</dbReference>
<dbReference type="GO" id="GO:0019432">
    <property type="term" value="P:triglyceride biosynthetic process"/>
    <property type="evidence" value="ECO:0000250"/>
    <property type="project" value="UniProtKB"/>
</dbReference>
<dbReference type="CDD" id="cd07987">
    <property type="entry name" value="LPLAT_MGAT-like"/>
    <property type="match status" value="1"/>
</dbReference>
<dbReference type="InterPro" id="IPR002123">
    <property type="entry name" value="Plipid/glycerol_acylTrfase"/>
</dbReference>
<dbReference type="PANTHER" id="PTHR22753:SF14">
    <property type="entry name" value="MONOACYLGLYCEROL_DIACYLGLYCEROL O-ACYLTRANSFERASE"/>
    <property type="match status" value="1"/>
</dbReference>
<dbReference type="PANTHER" id="PTHR22753">
    <property type="entry name" value="TRANSMEMBRANE PROTEIN 68"/>
    <property type="match status" value="1"/>
</dbReference>
<dbReference type="Pfam" id="PF01553">
    <property type="entry name" value="Acyltransferase"/>
    <property type="match status" value="1"/>
</dbReference>
<dbReference type="SUPFAM" id="SSF69593">
    <property type="entry name" value="Glycerol-3-phosphate (1)-acyltransferase"/>
    <property type="match status" value="1"/>
</dbReference>
<feature type="chain" id="PRO_0000254591" description="DGAT1/2-independent enzyme synthesizing storage lipids">
    <location>
        <begin position="1"/>
        <end position="334"/>
    </location>
</feature>
<feature type="topological domain" description="Lumenal" evidence="4">
    <location>
        <begin position="1"/>
        <end position="50"/>
    </location>
</feature>
<feature type="transmembrane region" description="Helical" evidence="3">
    <location>
        <begin position="51"/>
        <end position="71"/>
    </location>
</feature>
<feature type="topological domain" description="Cytoplasmic" evidence="4">
    <location>
        <begin position="72"/>
        <end position="125"/>
    </location>
</feature>
<feature type="transmembrane region" description="Helical" evidence="3">
    <location>
        <begin position="126"/>
        <end position="146"/>
    </location>
</feature>
<feature type="topological domain" description="Lumenal" evidence="4">
    <location>
        <begin position="147"/>
        <end position="334"/>
    </location>
</feature>
<feature type="active site" evidence="1">
    <location>
        <position position="130"/>
    </location>
</feature>
<feature type="glycosylation site" description="N-linked (GlcNAc...) asparagine" evidence="3">
    <location>
        <position position="5"/>
    </location>
</feature>